<reference key="1">
    <citation type="submission" date="2007-06" db="EMBL/GenBank/DDBJ databases">
        <authorList>
            <person name="Dodson R.J."/>
            <person name="Harkins D."/>
            <person name="Paulsen I.T."/>
        </authorList>
    </citation>
    <scope>NUCLEOTIDE SEQUENCE [LARGE SCALE GENOMIC DNA]</scope>
    <source>
        <strain>DSM 24068 / PA7</strain>
    </source>
</reference>
<comment type="function">
    <text evidence="1">With CysN forms the ATP sulfurylase (ATPS) that catalyzes the adenylation of sulfate producing adenosine 5'-phosphosulfate (APS) and diphosphate, the first enzymatic step in sulfur assimilation pathway. APS synthesis involves the formation of a high-energy phosphoric-sulfuric acid anhydride bond driven by GTP hydrolysis by CysN coupled to ATP hydrolysis by CysD.</text>
</comment>
<comment type="catalytic activity">
    <reaction evidence="1">
        <text>sulfate + ATP + H(+) = adenosine 5'-phosphosulfate + diphosphate</text>
        <dbReference type="Rhea" id="RHEA:18133"/>
        <dbReference type="ChEBI" id="CHEBI:15378"/>
        <dbReference type="ChEBI" id="CHEBI:16189"/>
        <dbReference type="ChEBI" id="CHEBI:30616"/>
        <dbReference type="ChEBI" id="CHEBI:33019"/>
        <dbReference type="ChEBI" id="CHEBI:58243"/>
        <dbReference type="EC" id="2.7.7.4"/>
    </reaction>
</comment>
<comment type="pathway">
    <text evidence="1">Sulfur metabolism; hydrogen sulfide biosynthesis; sulfite from sulfate: step 1/3.</text>
</comment>
<comment type="subunit">
    <text evidence="1">Heterodimer composed of CysD, the smaller subunit, and CysN.</text>
</comment>
<comment type="similarity">
    <text evidence="1">Belongs to the PAPS reductase family. CysD subfamily.</text>
</comment>
<organism>
    <name type="scientific">Pseudomonas paraeruginosa (strain DSM 24068 / PA7)</name>
    <name type="common">Pseudomonas aeruginosa (strain PA7)</name>
    <dbReference type="NCBI Taxonomy" id="381754"/>
    <lineage>
        <taxon>Bacteria</taxon>
        <taxon>Pseudomonadati</taxon>
        <taxon>Pseudomonadota</taxon>
        <taxon>Gammaproteobacteria</taxon>
        <taxon>Pseudomonadales</taxon>
        <taxon>Pseudomonadaceae</taxon>
        <taxon>Pseudomonas</taxon>
        <taxon>Pseudomonas paraeruginosa</taxon>
    </lineage>
</organism>
<protein>
    <recommendedName>
        <fullName evidence="1">Sulfate adenylyltransferase subunit 2</fullName>
        <ecNumber evidence="1">2.7.7.4</ecNumber>
    </recommendedName>
    <alternativeName>
        <fullName evidence="1">ATP-sulfurylase small subunit</fullName>
    </alternativeName>
    <alternativeName>
        <fullName evidence="1">Sulfate adenylate transferase</fullName>
        <shortName evidence="1">SAT</shortName>
    </alternativeName>
</protein>
<keyword id="KW-0067">ATP-binding</keyword>
<keyword id="KW-0547">Nucleotide-binding</keyword>
<keyword id="KW-0548">Nucleotidyltransferase</keyword>
<keyword id="KW-0808">Transferase</keyword>
<name>CYSD_PSEP7</name>
<evidence type="ECO:0000255" key="1">
    <source>
        <dbReference type="HAMAP-Rule" id="MF_00064"/>
    </source>
</evidence>
<gene>
    <name evidence="1" type="primary">cysD</name>
    <name type="ordered locus">PSPA7_5015</name>
</gene>
<sequence length="305" mass="35479">MVDKLTHLKQLEAESIHIIREVAAEFDNPVMLYSIGKDSAVMLHLARKAFFPGKLPFPVMHVDTRWKFQEMYRFRDRMVEEMGLDLITHVNPDGVAQGINPFTHGSAKHTDVMKTEGLKQALDKYGFDAAFGGARRDEEKSRAKERVYSFRDSKHRWDPKNQRPELWNIYNGKVKKGESIRVFPLSNWTELDIWQYIYLEGIPIVPLYFAAEREVIEKNGTLIMIDDERILEHLSDEEKARIEKRMVRFRTLGCYPLTGAVESSATTLPEIIQEMLLTRTSERQGRVIDHDQAGSMEEKKRQGYF</sequence>
<feature type="chain" id="PRO_1000008966" description="Sulfate adenylyltransferase subunit 2">
    <location>
        <begin position="1"/>
        <end position="305"/>
    </location>
</feature>
<proteinExistence type="inferred from homology"/>
<accession>A6VBB6</accession>
<dbReference type="EC" id="2.7.7.4" evidence="1"/>
<dbReference type="EMBL" id="CP000744">
    <property type="protein sequence ID" value="ABR83674.1"/>
    <property type="molecule type" value="Genomic_DNA"/>
</dbReference>
<dbReference type="RefSeq" id="WP_003094311.1">
    <property type="nucleotide sequence ID" value="NC_009656.1"/>
</dbReference>
<dbReference type="SMR" id="A6VBB6"/>
<dbReference type="KEGG" id="pap:PSPA7_5015"/>
<dbReference type="HOGENOM" id="CLU_043026_0_0_6"/>
<dbReference type="UniPathway" id="UPA00140">
    <property type="reaction ID" value="UER00204"/>
</dbReference>
<dbReference type="Proteomes" id="UP000001582">
    <property type="component" value="Chromosome"/>
</dbReference>
<dbReference type="GO" id="GO:0005524">
    <property type="term" value="F:ATP binding"/>
    <property type="evidence" value="ECO:0007669"/>
    <property type="project" value="UniProtKB-KW"/>
</dbReference>
<dbReference type="GO" id="GO:0004781">
    <property type="term" value="F:sulfate adenylyltransferase (ATP) activity"/>
    <property type="evidence" value="ECO:0007669"/>
    <property type="project" value="UniProtKB-UniRule"/>
</dbReference>
<dbReference type="GO" id="GO:0070814">
    <property type="term" value="P:hydrogen sulfide biosynthetic process"/>
    <property type="evidence" value="ECO:0007669"/>
    <property type="project" value="UniProtKB-UniRule"/>
</dbReference>
<dbReference type="GO" id="GO:0000103">
    <property type="term" value="P:sulfate assimilation"/>
    <property type="evidence" value="ECO:0007669"/>
    <property type="project" value="UniProtKB-UniRule"/>
</dbReference>
<dbReference type="CDD" id="cd23946">
    <property type="entry name" value="Sulfate_adenylyltransferase_2"/>
    <property type="match status" value="1"/>
</dbReference>
<dbReference type="FunFam" id="3.40.50.620:FF:000002">
    <property type="entry name" value="Sulfate adenylyltransferase subunit 2"/>
    <property type="match status" value="1"/>
</dbReference>
<dbReference type="Gene3D" id="3.40.50.620">
    <property type="entry name" value="HUPs"/>
    <property type="match status" value="1"/>
</dbReference>
<dbReference type="HAMAP" id="MF_00064">
    <property type="entry name" value="Sulf_adenylyltr_sub2"/>
    <property type="match status" value="1"/>
</dbReference>
<dbReference type="InterPro" id="IPR002500">
    <property type="entry name" value="PAPS_reduct_dom"/>
</dbReference>
<dbReference type="InterPro" id="IPR014729">
    <property type="entry name" value="Rossmann-like_a/b/a_fold"/>
</dbReference>
<dbReference type="InterPro" id="IPR011784">
    <property type="entry name" value="SO4_adenylTrfase_ssu"/>
</dbReference>
<dbReference type="InterPro" id="IPR050128">
    <property type="entry name" value="Sulfate_adenylyltrnsfr_sub2"/>
</dbReference>
<dbReference type="NCBIfam" id="TIGR02039">
    <property type="entry name" value="CysD"/>
    <property type="match status" value="1"/>
</dbReference>
<dbReference type="NCBIfam" id="NF003587">
    <property type="entry name" value="PRK05253.1"/>
    <property type="match status" value="1"/>
</dbReference>
<dbReference type="NCBIfam" id="NF009214">
    <property type="entry name" value="PRK12563.1"/>
    <property type="match status" value="1"/>
</dbReference>
<dbReference type="PANTHER" id="PTHR43196">
    <property type="entry name" value="SULFATE ADENYLYLTRANSFERASE SUBUNIT 2"/>
    <property type="match status" value="1"/>
</dbReference>
<dbReference type="PANTHER" id="PTHR43196:SF1">
    <property type="entry name" value="SULFATE ADENYLYLTRANSFERASE SUBUNIT 2"/>
    <property type="match status" value="1"/>
</dbReference>
<dbReference type="Pfam" id="PF01507">
    <property type="entry name" value="PAPS_reduct"/>
    <property type="match status" value="1"/>
</dbReference>
<dbReference type="PIRSF" id="PIRSF002936">
    <property type="entry name" value="CysDAde_trans"/>
    <property type="match status" value="1"/>
</dbReference>
<dbReference type="SUPFAM" id="SSF52402">
    <property type="entry name" value="Adenine nucleotide alpha hydrolases-like"/>
    <property type="match status" value="1"/>
</dbReference>